<evidence type="ECO:0000250" key="1">
    <source>
        <dbReference type="UniProtKB" id="O80883"/>
    </source>
</evidence>
<evidence type="ECO:0000255" key="2">
    <source>
        <dbReference type="PROSITE-ProRule" id="PRU00625"/>
    </source>
</evidence>
<evidence type="ECO:0000256" key="3">
    <source>
        <dbReference type="SAM" id="MobiDB-lite"/>
    </source>
</evidence>
<evidence type="ECO:0000269" key="4">
    <source>
    </source>
</evidence>
<evidence type="ECO:0000269" key="5">
    <source>
    </source>
</evidence>
<evidence type="ECO:0000269" key="6">
    <source>
    </source>
</evidence>
<evidence type="ECO:0000303" key="7">
    <source>
    </source>
</evidence>
<evidence type="ECO:0000305" key="8"/>
<evidence type="ECO:0000312" key="9">
    <source>
        <dbReference type="Araport" id="AT5G55020"/>
    </source>
</evidence>
<evidence type="ECO:0000312" key="10">
    <source>
        <dbReference type="EMBL" id="AAK54742.1"/>
    </source>
</evidence>
<evidence type="ECO:0000312" key="11">
    <source>
        <dbReference type="EMBL" id="BAB10576.1"/>
    </source>
</evidence>
<feature type="chain" id="PRO_0000439246" description="Transcription factor MYB120">
    <location>
        <begin position="1"/>
        <end position="523"/>
    </location>
</feature>
<feature type="domain" description="HTH myb-type 1" evidence="2">
    <location>
        <begin position="23"/>
        <end position="75"/>
    </location>
</feature>
<feature type="domain" description="HTH myb-type 2" evidence="2">
    <location>
        <begin position="76"/>
        <end position="130"/>
    </location>
</feature>
<feature type="DNA-binding region" description="H-T-H motif" evidence="2">
    <location>
        <begin position="51"/>
        <end position="75"/>
    </location>
</feature>
<feature type="DNA-binding region" description="H-T-H motif" evidence="2">
    <location>
        <begin position="103"/>
        <end position="126"/>
    </location>
</feature>
<feature type="region of interest" description="Disordered" evidence="3">
    <location>
        <begin position="140"/>
        <end position="254"/>
    </location>
</feature>
<feature type="region of interest" description="Disordered" evidence="3">
    <location>
        <begin position="332"/>
        <end position="373"/>
    </location>
</feature>
<feature type="region of interest" description="Disordered" evidence="3">
    <location>
        <begin position="396"/>
        <end position="426"/>
    </location>
</feature>
<feature type="region of interest" description="Disordered" evidence="3">
    <location>
        <begin position="444"/>
        <end position="470"/>
    </location>
</feature>
<feature type="compositionally biased region" description="Basic residues" evidence="3">
    <location>
        <begin position="147"/>
        <end position="167"/>
    </location>
</feature>
<feature type="compositionally biased region" description="Polar residues" evidence="3">
    <location>
        <begin position="175"/>
        <end position="185"/>
    </location>
</feature>
<feature type="compositionally biased region" description="Low complexity" evidence="3">
    <location>
        <begin position="202"/>
        <end position="212"/>
    </location>
</feature>
<feature type="compositionally biased region" description="Low complexity" evidence="3">
    <location>
        <begin position="223"/>
        <end position="232"/>
    </location>
</feature>
<feature type="compositionally biased region" description="Low complexity" evidence="3">
    <location>
        <begin position="341"/>
        <end position="368"/>
    </location>
</feature>
<feature type="compositionally biased region" description="Polar residues" evidence="3">
    <location>
        <begin position="396"/>
        <end position="410"/>
    </location>
</feature>
<feature type="splice variant" id="VSP_058817" description="In isoform 2.">
    <original>GKTKTTYNTSNLNYSSLQVKCKMFMIKTQI</original>
    <variation>DLKSKEEESLQMNTMQEDIAKLLDWGSDSGEISNGQSSVVTDDNLVLDVHQLASLFPADSTAVVAATNDQHNKNNNNNCSWDDMQGIR</variation>
    <location>
        <begin position="494"/>
        <end position="523"/>
    </location>
</feature>
<feature type="sequence conflict" description="In Ref. 2; AGK45259." evidence="8" ref="2">
    <original>L</original>
    <variation>V</variation>
    <location>
        <position position="110"/>
    </location>
</feature>
<gene>
    <name evidence="10" type="primary">MYB120</name>
    <name evidence="9" type="ordered locus">At5g55020</name>
    <name evidence="11" type="ORF">K13P22.2</name>
</gene>
<sequence length="523" mass="58217">MIMYGGGGAGKDGGSTNHLSDGGVILKKGPWTAAEDEILAAYVRENGEGNWNAVQKNTGLARCGKSCRLRWANHLRPNLKKGSFTGDEERLIIQLHAQLGNKWARMAAQLPGRTDNEIKNYWNTRLKRLLRQGLPLYPPDIIPNHQLHPHPHHQQQQQHNHHHHHHQQQQQHQQMYFQPQSSQRNTPSSSPLPSPTPANAKSSSSFTFHTTTANLLHPLSPHTPNTPSQLSSTPPPPPLSSPLCSPRNNQYPTLPLFALPRSQINNNNNGNFTFPRPPPLLQPPSSLFAKRYNNANTPLNCINRVSTAPFSPVSRDSYTSFLTLPYPSPTAQTATYHNTNNPYSSSPSFSLNPSSSSYPTSTSSPSFLHSHYTPSSTSFHTNPVYSMKQEQLPSNQIPQIDGFNNVNNFTDNERQNHNLNSSGAHRRSSSCSLLEDVFEEAEALASGGRGRPPKRRQLTASLPNHNNNTNNNDNFFSVSFGHYDSSDNLCSLQGKTKTTYNTSNLNYSSLQVKCKMFMIKTQI</sequence>
<proteinExistence type="evidence at transcript level"/>
<reference key="1">
    <citation type="journal article" date="2001" name="Curr. Opin. Plant Biol.">
        <title>The R2R3-MYB gene family in Arabidopsis thaliana.</title>
        <authorList>
            <person name="Stracke R."/>
            <person name="Werber M."/>
            <person name="Weisshaar B."/>
        </authorList>
    </citation>
    <scope>NUCLEOTIDE SEQUENCE [MRNA] (ISOFORM 1)</scope>
    <scope>GENE FAMILY</scope>
    <scope>NOMENCLATURE</scope>
    <source>
        <strain>cv. Columbia</strain>
    </source>
</reference>
<reference key="2">
    <citation type="journal article" date="2013" name="Curr. Biol.">
        <title>Three MYB transcription factors control pollen tube differentiation required for sperm release.</title>
        <authorList>
            <person name="Leydon A.R."/>
            <person name="Beale K.M."/>
            <person name="Woroniecka K."/>
            <person name="Castner E."/>
            <person name="Chen J."/>
            <person name="Horgan C."/>
            <person name="Palanivelu R."/>
            <person name="Johnson M.A."/>
        </authorList>
    </citation>
    <scope>NUCLEOTIDE SEQUENCE [MRNA] (ISOFORM 2)</scope>
    <scope>FUNCTION</scope>
    <scope>DISRUPTION PHENOTYPE</scope>
    <scope>TISSUE SPECIFICITY</scope>
    <scope>DEVELOPMENTAL STAGE</scope>
    <scope>SUBCELLULAR LOCATION</scope>
    <source>
        <strain>cv. Columbia</strain>
        <tissue>Pistil</tissue>
    </source>
</reference>
<reference key="3">
    <citation type="journal article" date="1999" name="DNA Res.">
        <title>Structural analysis of Arabidopsis thaliana chromosome 5. IX. Sequence features of the regions of 1,011,550 bp covered by seventeen P1 and TAC clones.</title>
        <authorList>
            <person name="Kaneko T."/>
            <person name="Katoh T."/>
            <person name="Sato S."/>
            <person name="Nakamura Y."/>
            <person name="Asamizu E."/>
            <person name="Kotani H."/>
            <person name="Miyajima N."/>
            <person name="Tabata S."/>
        </authorList>
    </citation>
    <scope>NUCLEOTIDE SEQUENCE [LARGE SCALE GENOMIC DNA]</scope>
    <source>
        <strain>cv. Columbia</strain>
    </source>
</reference>
<reference key="4">
    <citation type="journal article" date="2017" name="Plant J.">
        <title>Araport11: a complete reannotation of the Arabidopsis thaliana reference genome.</title>
        <authorList>
            <person name="Cheng C.Y."/>
            <person name="Krishnakumar V."/>
            <person name="Chan A.P."/>
            <person name="Thibaud-Nissen F."/>
            <person name="Schobel S."/>
            <person name="Town C.D."/>
        </authorList>
    </citation>
    <scope>GENOME REANNOTATION</scope>
    <source>
        <strain>cv. Columbia</strain>
    </source>
</reference>
<reference key="5">
    <citation type="journal article" date="2009" name="PLoS Genet.">
        <title>Penetration of the stigma and style elicits a novel transcriptome in pollen tubes, pointing to genes critical for growth in a pistil.</title>
        <authorList>
            <person name="Qin Y."/>
            <person name="Leydon A.R."/>
            <person name="Manziello A."/>
            <person name="Pandey R."/>
            <person name="Mount D."/>
            <person name="Denic S."/>
            <person name="Vasic B."/>
            <person name="Johnson M.A."/>
            <person name="Palanivelu R."/>
        </authorList>
    </citation>
    <scope>INDUCTION BY POLLEN TUBE GERMINATION</scope>
    <scope>DISRUPTION PHENOTYPE</scope>
</reference>
<reference key="6">
    <citation type="journal article" date="2013" name="PLoS Genet.">
        <title>MYB97, MYB101 and MYB120 function as male factors that control pollen tube-synergid interaction in Arabidopsis thaliana fertilization.</title>
        <authorList>
            <person name="Liang Y."/>
            <person name="Tan Z.-M."/>
            <person name="Zhu L."/>
            <person name="Niu Q.-K."/>
            <person name="Zhou J.-J."/>
            <person name="Li M."/>
            <person name="Chen L.-Q."/>
            <person name="Zhang X.-Q."/>
            <person name="Ye D."/>
        </authorList>
    </citation>
    <scope>FUNCTION</scope>
    <scope>DISRUPTION PHENOTYPE</scope>
    <scope>SUBCELLULAR LOCATION</scope>
    <scope>TISSUE SPECIFICITY</scope>
    <source>
        <strain>cv. Columbia</strain>
    </source>
</reference>
<protein>
    <recommendedName>
        <fullName evidence="7">Transcription factor MYB120</fullName>
    </recommendedName>
    <alternativeName>
        <fullName evidence="7">Myb-related protein 120</fullName>
        <shortName evidence="7">AtMYB120</shortName>
    </alternativeName>
</protein>
<dbReference type="EMBL" id="AF371979">
    <property type="protein sequence ID" value="AAK54742.1"/>
    <property type="molecule type" value="mRNA"/>
</dbReference>
<dbReference type="EMBL" id="KC544014">
    <property type="protein sequence ID" value="AGK45259.1"/>
    <property type="molecule type" value="mRNA"/>
</dbReference>
<dbReference type="EMBL" id="AB017059">
    <property type="protein sequence ID" value="BAB10576.1"/>
    <property type="status" value="ALT_SEQ"/>
    <property type="molecule type" value="Genomic_DNA"/>
</dbReference>
<dbReference type="EMBL" id="CP002688">
    <property type="protein sequence ID" value="AED96570.1"/>
    <property type="molecule type" value="Genomic_DNA"/>
</dbReference>
<dbReference type="RefSeq" id="NP_568819.1">
    <molecule id="Q94FL7-1"/>
    <property type="nucleotide sequence ID" value="NM_124884.2"/>
</dbReference>
<dbReference type="SMR" id="Q94FL7"/>
<dbReference type="STRING" id="3702.Q94FL7"/>
<dbReference type="GlyGen" id="Q94FL7">
    <property type="glycosylation" value="2 sites"/>
</dbReference>
<dbReference type="PaxDb" id="3702-AT5G55020.1"/>
<dbReference type="EnsemblPlants" id="AT5G55020.1">
    <molecule id="Q94FL7-1"/>
    <property type="protein sequence ID" value="AT5G55020.1"/>
    <property type="gene ID" value="AT5G55020"/>
</dbReference>
<dbReference type="GeneID" id="835593"/>
<dbReference type="Gramene" id="AT5G55020.1">
    <molecule id="Q94FL7-1"/>
    <property type="protein sequence ID" value="AT5G55020.1"/>
    <property type="gene ID" value="AT5G55020"/>
</dbReference>
<dbReference type="KEGG" id="ath:AT5G55020"/>
<dbReference type="Araport" id="AT5G55020"/>
<dbReference type="TAIR" id="AT5G55020">
    <property type="gene designation" value="MYB120"/>
</dbReference>
<dbReference type="eggNOG" id="KOG0048">
    <property type="taxonomic scope" value="Eukaryota"/>
</dbReference>
<dbReference type="HOGENOM" id="CLU_023548_0_0_1"/>
<dbReference type="InParanoid" id="Q94FL7"/>
<dbReference type="OMA" id="DNERQNH"/>
<dbReference type="PhylomeDB" id="Q94FL7"/>
<dbReference type="PRO" id="PR:Q94FL7"/>
<dbReference type="Proteomes" id="UP000006548">
    <property type="component" value="Chromosome 5"/>
</dbReference>
<dbReference type="ExpressionAtlas" id="Q94FL7">
    <property type="expression patterns" value="baseline and differential"/>
</dbReference>
<dbReference type="GO" id="GO:0005634">
    <property type="term" value="C:nucleus"/>
    <property type="evidence" value="ECO:0000314"/>
    <property type="project" value="UniProtKB"/>
</dbReference>
<dbReference type="GO" id="GO:0090406">
    <property type="term" value="C:pollen tube"/>
    <property type="evidence" value="ECO:0000314"/>
    <property type="project" value="TAIR"/>
</dbReference>
<dbReference type="GO" id="GO:0003677">
    <property type="term" value="F:DNA binding"/>
    <property type="evidence" value="ECO:0007669"/>
    <property type="project" value="UniProtKB-KW"/>
</dbReference>
<dbReference type="GO" id="GO:0003700">
    <property type="term" value="F:DNA-binding transcription factor activity"/>
    <property type="evidence" value="ECO:0000314"/>
    <property type="project" value="UniProtKB"/>
</dbReference>
<dbReference type="GO" id="GO:0048235">
    <property type="term" value="P:pollen sperm cell differentiation"/>
    <property type="evidence" value="ECO:0000315"/>
    <property type="project" value="UniProtKB"/>
</dbReference>
<dbReference type="GO" id="GO:0009860">
    <property type="term" value="P:pollen tube growth"/>
    <property type="evidence" value="ECO:0000315"/>
    <property type="project" value="TAIR"/>
</dbReference>
<dbReference type="GO" id="GO:0045893">
    <property type="term" value="P:positive regulation of DNA-templated transcription"/>
    <property type="evidence" value="ECO:0000314"/>
    <property type="project" value="UniProtKB"/>
</dbReference>
<dbReference type="GO" id="GO:0010468">
    <property type="term" value="P:regulation of gene expression"/>
    <property type="evidence" value="ECO:0000315"/>
    <property type="project" value="UniProtKB"/>
</dbReference>
<dbReference type="GO" id="GO:0080092">
    <property type="term" value="P:regulation of pollen tube growth"/>
    <property type="evidence" value="ECO:0000315"/>
    <property type="project" value="UniProtKB"/>
</dbReference>
<dbReference type="CDD" id="cd00167">
    <property type="entry name" value="SANT"/>
    <property type="match status" value="2"/>
</dbReference>
<dbReference type="FunFam" id="1.10.10.60:FF:000001">
    <property type="entry name" value="MYB-related transcription factor"/>
    <property type="match status" value="1"/>
</dbReference>
<dbReference type="FunFam" id="1.10.10.60:FF:000119">
    <property type="entry name" value="Transcription factor GAMYB"/>
    <property type="match status" value="1"/>
</dbReference>
<dbReference type="Gene3D" id="1.10.10.60">
    <property type="entry name" value="Homeodomain-like"/>
    <property type="match status" value="2"/>
</dbReference>
<dbReference type="InterPro" id="IPR009057">
    <property type="entry name" value="Homeodomain-like_sf"/>
</dbReference>
<dbReference type="InterPro" id="IPR017930">
    <property type="entry name" value="Myb_dom"/>
</dbReference>
<dbReference type="InterPro" id="IPR001005">
    <property type="entry name" value="SANT/Myb"/>
</dbReference>
<dbReference type="PANTHER" id="PTHR47995:SF17">
    <property type="entry name" value="TRANSCRIPTION FACTOR MYB120"/>
    <property type="match status" value="1"/>
</dbReference>
<dbReference type="PANTHER" id="PTHR47995">
    <property type="entry name" value="TRANSCRIPTION FACTOR MYB33-RELATED"/>
    <property type="match status" value="1"/>
</dbReference>
<dbReference type="Pfam" id="PF00249">
    <property type="entry name" value="Myb_DNA-binding"/>
    <property type="match status" value="2"/>
</dbReference>
<dbReference type="SMART" id="SM00717">
    <property type="entry name" value="SANT"/>
    <property type="match status" value="2"/>
</dbReference>
<dbReference type="SUPFAM" id="SSF46689">
    <property type="entry name" value="Homeodomain-like"/>
    <property type="match status" value="1"/>
</dbReference>
<dbReference type="PROSITE" id="PS51294">
    <property type="entry name" value="HTH_MYB"/>
    <property type="match status" value="2"/>
</dbReference>
<comment type="function">
    <text evidence="1 5 6">Transcription activator (PubMed:24278028). Binds to 5'-CAACTGTC-3' and/or 5'-TAACAAA-3' motif in target gene promoter to promote their expression (By similarity). Together with MYB97 and MYB101, functions as a male factor that controls pollen tube-synergid interaction in fertilization. Required for pollen tube growth arrest and sperm cell release in the female gametophyte, probably via the regulation of pollen tube-specific gene expression (PubMed:23791732, PubMed:24278028).</text>
</comment>
<comment type="subcellular location">
    <subcellularLocation>
        <location evidence="2 5 6">Nucleus</location>
    </subcellularLocation>
    <text evidence="5">Detected in the vegetative nucleus of pollen tubes.</text>
</comment>
<comment type="alternative products">
    <event type="alternative splicing"/>
    <isoform>
        <id>Q94FL7-1</id>
        <name>1</name>
        <sequence type="displayed"/>
    </isoform>
    <isoform>
        <id>Q94FL7-2</id>
        <name>2</name>
        <sequence type="described" ref="VSP_058817"/>
    </isoform>
</comment>
<comment type="tissue specificity">
    <text evidence="5 6">Expressed in pollen grains and pollen tube (PubMed:23791732, PubMed:24278028). Mostly expressed in mature pollen grains, and, to a lower extent, in inflorescences and siliques (PubMed:24278028).</text>
</comment>
<comment type="developmental stage">
    <text evidence="5">Accumulates in the pollen tube nucleus during pollen tube growth through the pistil.</text>
</comment>
<comment type="induction">
    <text evidence="4">Accumulates in pollen tube 4 hours after pollen germination.</text>
</comment>
<comment type="disruption phenotype">
    <text evidence="4 5 6">Disrupted pollen tube growth (PubMed:19714218). The triple mutant myb97 myb101 myb120 is impaired in pollen tube growth arrest and subsequent sperm cell release in the female gametophyte thus leading to a drastically reduced fertility. Altered pollen tube-specific gene expression (PubMed:23791732, PubMed:24278028).</text>
</comment>
<comment type="sequence caution" evidence="8">
    <conflict type="erroneous gene model prediction">
        <sequence resource="EMBL-CDS" id="BAB10576"/>
    </conflict>
</comment>
<organism>
    <name type="scientific">Arabidopsis thaliana</name>
    <name type="common">Mouse-ear cress</name>
    <dbReference type="NCBI Taxonomy" id="3702"/>
    <lineage>
        <taxon>Eukaryota</taxon>
        <taxon>Viridiplantae</taxon>
        <taxon>Streptophyta</taxon>
        <taxon>Embryophyta</taxon>
        <taxon>Tracheophyta</taxon>
        <taxon>Spermatophyta</taxon>
        <taxon>Magnoliopsida</taxon>
        <taxon>eudicotyledons</taxon>
        <taxon>Gunneridae</taxon>
        <taxon>Pentapetalae</taxon>
        <taxon>rosids</taxon>
        <taxon>malvids</taxon>
        <taxon>Brassicales</taxon>
        <taxon>Brassicaceae</taxon>
        <taxon>Camelineae</taxon>
        <taxon>Arabidopsis</taxon>
    </lineage>
</organism>
<accession>Q94FL7</accession>
<accession>N0ACH1</accession>
<accession>Q9FIA4</accession>
<keyword id="KW-0010">Activator</keyword>
<keyword id="KW-0025">Alternative splicing</keyword>
<keyword id="KW-0238">DNA-binding</keyword>
<keyword id="KW-0539">Nucleus</keyword>
<keyword id="KW-1185">Reference proteome</keyword>
<keyword id="KW-0677">Repeat</keyword>
<keyword id="KW-0804">Transcription</keyword>
<keyword id="KW-0805">Transcription regulation</keyword>
<name>MY120_ARATH</name>